<evidence type="ECO:0000250" key="1"/>
<evidence type="ECO:0000255" key="2"/>
<evidence type="ECO:0000269" key="3">
    <source>
    </source>
</evidence>
<evidence type="ECO:0000305" key="4"/>
<keyword id="KW-0046">Antibiotic resistance</keyword>
<keyword id="KW-0050">Antiport</keyword>
<keyword id="KW-0997">Cell inner membrane</keyword>
<keyword id="KW-1003">Cell membrane</keyword>
<keyword id="KW-0406">Ion transport</keyword>
<keyword id="KW-0472">Membrane</keyword>
<keyword id="KW-1185">Reference proteome</keyword>
<keyword id="KW-0812">Transmembrane</keyword>
<keyword id="KW-1133">Transmembrane helix</keyword>
<keyword id="KW-0813">Transport</keyword>
<proteinExistence type="inferred from homology"/>
<protein>
    <recommendedName>
        <fullName>Multidrug resistance protein PmpM</fullName>
    </recommendedName>
    <alternativeName>
        <fullName>H(+)/drug antiporter</fullName>
    </alternativeName>
    <alternativeName>
        <fullName>Multidrug-efflux transporter</fullName>
    </alternativeName>
</protein>
<comment type="function">
    <text evidence="3">Multidrug efflux pump that functions as an H(+)/drug antiporter. Confers resistance to benzalkonium chloride, fluoroquinolones, ethidium bromide, acriflavine and tetraphenylphosphonium chloride.</text>
</comment>
<comment type="subcellular location">
    <subcellularLocation>
        <location evidence="1">Cell inner membrane</location>
        <topology evidence="1">Multi-pass membrane protein</topology>
    </subcellularLocation>
</comment>
<comment type="similarity">
    <text evidence="4">Belongs to the multi antimicrobial extrusion (MATE) (TC 2.A.66.1) family.</text>
</comment>
<feature type="chain" id="PRO_0000164231" description="Multidrug resistance protein PmpM">
    <location>
        <begin position="1"/>
        <end position="477"/>
    </location>
</feature>
<feature type="transmembrane region" description="Helical" evidence="2">
    <location>
        <begin position="21"/>
        <end position="41"/>
    </location>
</feature>
<feature type="transmembrane region" description="Helical" evidence="2">
    <location>
        <begin position="56"/>
        <end position="76"/>
    </location>
</feature>
<feature type="transmembrane region" description="Helical" evidence="2">
    <location>
        <begin position="104"/>
        <end position="124"/>
    </location>
</feature>
<feature type="transmembrane region" description="Helical" evidence="2">
    <location>
        <begin position="133"/>
        <end position="153"/>
    </location>
</feature>
<feature type="transmembrane region" description="Helical" evidence="2">
    <location>
        <begin position="171"/>
        <end position="191"/>
    </location>
</feature>
<feature type="transmembrane region" description="Helical" evidence="2">
    <location>
        <begin position="202"/>
        <end position="222"/>
    </location>
</feature>
<feature type="transmembrane region" description="Helical" evidence="2">
    <location>
        <begin position="253"/>
        <end position="273"/>
    </location>
</feature>
<feature type="transmembrane region" description="Helical" evidence="2">
    <location>
        <begin position="286"/>
        <end position="306"/>
    </location>
</feature>
<feature type="transmembrane region" description="Helical" evidence="2">
    <location>
        <begin position="326"/>
        <end position="346"/>
    </location>
</feature>
<feature type="transmembrane region" description="Helical" evidence="2">
    <location>
        <begin position="360"/>
        <end position="380"/>
    </location>
</feature>
<feature type="transmembrane region" description="Helical" evidence="2">
    <location>
        <begin position="398"/>
        <end position="418"/>
    </location>
</feature>
<feature type="transmembrane region" description="Helical" evidence="2">
    <location>
        <begin position="431"/>
        <end position="451"/>
    </location>
</feature>
<reference key="1">
    <citation type="journal article" date="2000" name="Nature">
        <title>Complete genome sequence of Pseudomonas aeruginosa PAO1, an opportunistic pathogen.</title>
        <authorList>
            <person name="Stover C.K."/>
            <person name="Pham X.-Q.T."/>
            <person name="Erwin A.L."/>
            <person name="Mizoguchi S.D."/>
            <person name="Warrener P."/>
            <person name="Hickey M.J."/>
            <person name="Brinkman F.S.L."/>
            <person name="Hufnagle W.O."/>
            <person name="Kowalik D.J."/>
            <person name="Lagrou M."/>
            <person name="Garber R.L."/>
            <person name="Goltry L."/>
            <person name="Tolentino E."/>
            <person name="Westbrock-Wadman S."/>
            <person name="Yuan Y."/>
            <person name="Brody L.L."/>
            <person name="Coulter S.N."/>
            <person name="Folger K.R."/>
            <person name="Kas A."/>
            <person name="Larbig K."/>
            <person name="Lim R.M."/>
            <person name="Smith K.A."/>
            <person name="Spencer D.H."/>
            <person name="Wong G.K.-S."/>
            <person name="Wu Z."/>
            <person name="Paulsen I.T."/>
            <person name="Reizer J."/>
            <person name="Saier M.H. Jr."/>
            <person name="Hancock R.E.W."/>
            <person name="Lory S."/>
            <person name="Olson M.V."/>
        </authorList>
    </citation>
    <scope>NUCLEOTIDE SEQUENCE [LARGE SCALE GENOMIC DNA]</scope>
    <source>
        <strain>ATCC 15692 / DSM 22644 / CIP 104116 / JCM 14847 / LMG 12228 / 1C / PRS 101 / PAO1</strain>
    </source>
</reference>
<reference key="2">
    <citation type="journal article" date="2004" name="J. Bacteriol.">
        <title>An H(+)-coupled multidrug efflux pump, PmpM, a member of the MATE family of transporters, from Pseudomonas aeruginosa.</title>
        <authorList>
            <person name="He G.-X."/>
            <person name="Kuroda T."/>
            <person name="Mima T."/>
            <person name="Morita Y."/>
            <person name="Mizushima T."/>
            <person name="Tsuchiya T."/>
        </authorList>
    </citation>
    <scope>FUNCTION</scope>
    <source>
        <strain>ATCC 15692 / DSM 22644 / CIP 104116 / JCM 14847 / LMG 12228 / 1C / PRS 101 / PAO1</strain>
    </source>
</reference>
<accession>Q9I3Y3</accession>
<dbReference type="EMBL" id="AE004091">
    <property type="protein sequence ID" value="AAG04750.1"/>
    <property type="molecule type" value="Genomic_DNA"/>
</dbReference>
<dbReference type="PIR" id="B83476">
    <property type="entry name" value="B83476"/>
</dbReference>
<dbReference type="RefSeq" id="NP_250052.1">
    <property type="nucleotide sequence ID" value="NC_002516.2"/>
</dbReference>
<dbReference type="RefSeq" id="WP_003112388.1">
    <property type="nucleotide sequence ID" value="NZ_QZGE01000005.1"/>
</dbReference>
<dbReference type="SMR" id="Q9I3Y3"/>
<dbReference type="FunCoup" id="Q9I3Y3">
    <property type="interactions" value="326"/>
</dbReference>
<dbReference type="STRING" id="208964.PA1361"/>
<dbReference type="CARD" id="ARO:3004077">
    <property type="molecule name" value="PmpM"/>
    <property type="mechanism identifier" value="ARO:0010000"/>
    <property type="mechanism name" value="antibiotic efflux"/>
</dbReference>
<dbReference type="TCDB" id="2.A.66.1.12">
    <property type="family name" value="the multidrug/oligosaccharidyl-lipid/polysaccharide (mop) flippase superfamily"/>
</dbReference>
<dbReference type="PaxDb" id="208964-PA1361"/>
<dbReference type="GeneID" id="880959"/>
<dbReference type="KEGG" id="pae:PA1361"/>
<dbReference type="PATRIC" id="fig|208964.12.peg.1414"/>
<dbReference type="PseudoCAP" id="PA1361"/>
<dbReference type="HOGENOM" id="CLU_012893_6_0_6"/>
<dbReference type="InParanoid" id="Q9I3Y3"/>
<dbReference type="OrthoDB" id="9780160at2"/>
<dbReference type="PhylomeDB" id="Q9I3Y3"/>
<dbReference type="BioCyc" id="PAER208964:G1FZ6-1387-MONOMER"/>
<dbReference type="Proteomes" id="UP000002438">
    <property type="component" value="Chromosome"/>
</dbReference>
<dbReference type="GO" id="GO:0016020">
    <property type="term" value="C:membrane"/>
    <property type="evidence" value="ECO:0000318"/>
    <property type="project" value="GO_Central"/>
</dbReference>
<dbReference type="GO" id="GO:0098567">
    <property type="term" value="C:periplasmic side of plasma membrane"/>
    <property type="evidence" value="ECO:0000314"/>
    <property type="project" value="PseudoCAP"/>
</dbReference>
<dbReference type="GO" id="GO:0005886">
    <property type="term" value="C:plasma membrane"/>
    <property type="evidence" value="ECO:0000314"/>
    <property type="project" value="PseudoCAP"/>
</dbReference>
<dbReference type="GO" id="GO:0015297">
    <property type="term" value="F:antiporter activity"/>
    <property type="evidence" value="ECO:0007669"/>
    <property type="project" value="UniProtKB-KW"/>
</dbReference>
<dbReference type="GO" id="GO:0042910">
    <property type="term" value="F:xenobiotic transmembrane transporter activity"/>
    <property type="evidence" value="ECO:0000318"/>
    <property type="project" value="GO_Central"/>
</dbReference>
<dbReference type="GO" id="GO:0006811">
    <property type="term" value="P:monoatomic ion transport"/>
    <property type="evidence" value="ECO:0007669"/>
    <property type="project" value="UniProtKB-KW"/>
</dbReference>
<dbReference type="GO" id="GO:0046677">
    <property type="term" value="P:response to antibiotic"/>
    <property type="evidence" value="ECO:0000318"/>
    <property type="project" value="GO_Central"/>
</dbReference>
<dbReference type="CDD" id="cd13131">
    <property type="entry name" value="MATE_NorM_like"/>
    <property type="match status" value="1"/>
</dbReference>
<dbReference type="InterPro" id="IPR002528">
    <property type="entry name" value="MATE_fam"/>
</dbReference>
<dbReference type="InterPro" id="IPR050222">
    <property type="entry name" value="MATE_MdtK"/>
</dbReference>
<dbReference type="InterPro" id="IPR048279">
    <property type="entry name" value="MdtK-like"/>
</dbReference>
<dbReference type="NCBIfam" id="TIGR00797">
    <property type="entry name" value="matE"/>
    <property type="match status" value="1"/>
</dbReference>
<dbReference type="PANTHER" id="PTHR43298:SF2">
    <property type="entry name" value="FMN_FAD EXPORTER YEEO-RELATED"/>
    <property type="match status" value="1"/>
</dbReference>
<dbReference type="PANTHER" id="PTHR43298">
    <property type="entry name" value="MULTIDRUG RESISTANCE PROTEIN NORM-RELATED"/>
    <property type="match status" value="1"/>
</dbReference>
<dbReference type="Pfam" id="PF01554">
    <property type="entry name" value="MatE"/>
    <property type="match status" value="2"/>
</dbReference>
<dbReference type="PIRSF" id="PIRSF006603">
    <property type="entry name" value="DinF"/>
    <property type="match status" value="1"/>
</dbReference>
<gene>
    <name type="primary">pmpM</name>
    <name type="synonym">norM</name>
    <name type="ordered locus">PA1361</name>
</gene>
<name>PMPM_PSEAE</name>
<organism>
    <name type="scientific">Pseudomonas aeruginosa (strain ATCC 15692 / DSM 22644 / CIP 104116 / JCM 14847 / LMG 12228 / 1C / PRS 101 / PAO1)</name>
    <dbReference type="NCBI Taxonomy" id="208964"/>
    <lineage>
        <taxon>Bacteria</taxon>
        <taxon>Pseudomonadati</taxon>
        <taxon>Pseudomonadota</taxon>
        <taxon>Gammaproteobacteria</taxon>
        <taxon>Pseudomonadales</taxon>
        <taxon>Pseudomonadaceae</taxon>
        <taxon>Pseudomonas</taxon>
    </lineage>
</organism>
<sequence length="477" mass="50870">MNSPALPLSRGLRIRAELKELLTLAAPIMIAQLATTAMGFVDAVMAGRASPHDLAAVALGNSIWIPMFLLMTGTLLATTAKVAQRHGAGDQPGTGPLVRQALWLALLIGPLSGAVLWWLSEPILGLMKVRPELIGPSLLYLKGIALGFPAAALYHVLRCYTNGLGRTRPSMVLGIGGLLLNIPINYALIYGHFGMPKMGGPGCGWATGSVMWFMFLGMLFWVNKASIYRASQLFSRWEWPDRATIGPLVAVGLPIGIAVFAESSIFSVIALLIGGLDENVVAGHQIALNFSALVFMIPYSLGMAVTVRVGHNLGAGLPRDARFAAGVGMAAALGYACVSASLMLLLREQIAAMYSPDPAVIAIAASLIVFSALFQFSDALQVTAAGALRGYQDTRVTMIMTLFAYWGIGLPVGYSLGLTDWFQEPTGPRGLWQGLVVGLTGAAIMLCIRLARSARRFIRQHERLQREDAEAASVLGR</sequence>